<reference key="1">
    <citation type="submission" date="2008-04" db="EMBL/GenBank/DDBJ databases">
        <title>Complete sequence of Clostridium botulinum strain Eklund.</title>
        <authorList>
            <person name="Brinkac L.M."/>
            <person name="Brown J.L."/>
            <person name="Bruce D."/>
            <person name="Detter C."/>
            <person name="Munk C."/>
            <person name="Smith L.A."/>
            <person name="Smith T.J."/>
            <person name="Sutton G."/>
            <person name="Brettin T.S."/>
        </authorList>
    </citation>
    <scope>NUCLEOTIDE SEQUENCE [LARGE SCALE GENOMIC DNA]</scope>
    <source>
        <strain>Eklund 17B / Type B</strain>
    </source>
</reference>
<gene>
    <name type="ordered locus">CLL_A1210</name>
</gene>
<dbReference type="EMBL" id="CP001056">
    <property type="protein sequence ID" value="ACD22811.1"/>
    <property type="molecule type" value="Genomic_DNA"/>
</dbReference>
<dbReference type="SMR" id="B2THR6"/>
<dbReference type="KEGG" id="cbk:CLL_A1210"/>
<dbReference type="PATRIC" id="fig|935198.13.peg.1155"/>
<dbReference type="HOGENOM" id="CLU_165326_0_0_9"/>
<dbReference type="Proteomes" id="UP000001195">
    <property type="component" value="Chromosome"/>
</dbReference>
<dbReference type="HAMAP" id="MF_01503">
    <property type="entry name" value="RemA"/>
    <property type="match status" value="1"/>
</dbReference>
<dbReference type="InterPro" id="IPR007169">
    <property type="entry name" value="RemA-like"/>
</dbReference>
<dbReference type="NCBIfam" id="NF046064">
    <property type="entry name" value="MtxBflmRegRemA"/>
    <property type="match status" value="1"/>
</dbReference>
<dbReference type="NCBIfam" id="NF003315">
    <property type="entry name" value="PRK04323.1"/>
    <property type="match status" value="1"/>
</dbReference>
<dbReference type="PANTHER" id="PTHR38449:SF1">
    <property type="entry name" value="REGULATORY PROTEIN SSL2874-RELATED"/>
    <property type="match status" value="1"/>
</dbReference>
<dbReference type="PANTHER" id="PTHR38449">
    <property type="entry name" value="REGULATORY PROTEIN TM_1690-RELATED"/>
    <property type="match status" value="1"/>
</dbReference>
<dbReference type="Pfam" id="PF04025">
    <property type="entry name" value="RemA-like"/>
    <property type="match status" value="1"/>
</dbReference>
<protein>
    <recommendedName>
        <fullName evidence="1">Putative regulatory protein CLL_A1210</fullName>
    </recommendedName>
</protein>
<sequence length="89" mass="9766">MGIKLINIGFGNIVSANRLVAIVSPESAPIKRIIQEARDRGMLIDATYGRRTRAVIITDSDHVILSAVQPETVAHRLSTKDEVVDEVDE</sequence>
<comment type="similarity">
    <text evidence="1">Belongs to the RemA family.</text>
</comment>
<accession>B2THR6</accession>
<feature type="chain" id="PRO_1000198216" description="Putative regulatory protein CLL_A1210">
    <location>
        <begin position="1"/>
        <end position="89"/>
    </location>
</feature>
<proteinExistence type="inferred from homology"/>
<evidence type="ECO:0000255" key="1">
    <source>
        <dbReference type="HAMAP-Rule" id="MF_01503"/>
    </source>
</evidence>
<organism>
    <name type="scientific">Clostridium botulinum (strain Eklund 17B / Type B)</name>
    <dbReference type="NCBI Taxonomy" id="935198"/>
    <lineage>
        <taxon>Bacteria</taxon>
        <taxon>Bacillati</taxon>
        <taxon>Bacillota</taxon>
        <taxon>Clostridia</taxon>
        <taxon>Eubacteriales</taxon>
        <taxon>Clostridiaceae</taxon>
        <taxon>Clostridium</taxon>
    </lineage>
</organism>
<name>Y1210_CLOBB</name>